<organism>
    <name type="scientific">Chlorobium limicola (strain DSM 245 / NBRC 103803 / 6330)</name>
    <dbReference type="NCBI Taxonomy" id="290315"/>
    <lineage>
        <taxon>Bacteria</taxon>
        <taxon>Pseudomonadati</taxon>
        <taxon>Chlorobiota</taxon>
        <taxon>Chlorobiia</taxon>
        <taxon>Chlorobiales</taxon>
        <taxon>Chlorobiaceae</taxon>
        <taxon>Chlorobium/Pelodictyon group</taxon>
        <taxon>Chlorobium</taxon>
    </lineage>
</organism>
<gene>
    <name type="ordered locus">Clim_2003</name>
</gene>
<sequence>MSELYRFGISLEKTLIDAFDRHISAQHYKSRSEALRDLIREELLKKQWREGGSVAGAIVMTYDHHKRELLNMLLDIQHDFQETIISTQHVHLDHHHCLEIIAVRGTADQVEKLATQLKVQAGVKHLSLSISTAG</sequence>
<name>NIKR_CHLL2</name>
<reference key="1">
    <citation type="submission" date="2008-05" db="EMBL/GenBank/DDBJ databases">
        <title>Complete sequence of Chlorobium limicola DSM 245.</title>
        <authorList>
            <consortium name="US DOE Joint Genome Institute"/>
            <person name="Lucas S."/>
            <person name="Copeland A."/>
            <person name="Lapidus A."/>
            <person name="Glavina del Rio T."/>
            <person name="Dalin E."/>
            <person name="Tice H."/>
            <person name="Bruce D."/>
            <person name="Goodwin L."/>
            <person name="Pitluck S."/>
            <person name="Schmutz J."/>
            <person name="Larimer F."/>
            <person name="Land M."/>
            <person name="Hauser L."/>
            <person name="Kyrpides N."/>
            <person name="Ovchinnikova G."/>
            <person name="Zhao F."/>
            <person name="Li T."/>
            <person name="Liu Z."/>
            <person name="Overmann J."/>
            <person name="Bryant D.A."/>
            <person name="Richardson P."/>
        </authorList>
    </citation>
    <scope>NUCLEOTIDE SEQUENCE [LARGE SCALE GENOMIC DNA]</scope>
    <source>
        <strain>DSM 245 / NBRC 103803 / 6330</strain>
    </source>
</reference>
<comment type="function">
    <text evidence="1">Transcriptional regulator.</text>
</comment>
<comment type="cofactor">
    <cofactor evidence="1">
        <name>Ni(2+)</name>
        <dbReference type="ChEBI" id="CHEBI:49786"/>
    </cofactor>
    <text evidence="1">Binds 1 nickel ion per subunit.</text>
</comment>
<comment type="similarity">
    <text evidence="1">Belongs to the transcriptional regulatory CopG/NikR family.</text>
</comment>
<accession>B3EFS3</accession>
<proteinExistence type="inferred from homology"/>
<evidence type="ECO:0000255" key="1">
    <source>
        <dbReference type="HAMAP-Rule" id="MF_00476"/>
    </source>
</evidence>
<feature type="chain" id="PRO_1000125810" description="Putative nickel-responsive regulator">
    <location>
        <begin position="1"/>
        <end position="134"/>
    </location>
</feature>
<feature type="binding site" evidence="1">
    <location>
        <position position="78"/>
    </location>
    <ligand>
        <name>Ni(2+)</name>
        <dbReference type="ChEBI" id="CHEBI:49786"/>
    </ligand>
</feature>
<feature type="binding site" evidence="1">
    <location>
        <position position="89"/>
    </location>
    <ligand>
        <name>Ni(2+)</name>
        <dbReference type="ChEBI" id="CHEBI:49786"/>
    </ligand>
</feature>
<feature type="binding site" evidence="1">
    <location>
        <position position="91"/>
    </location>
    <ligand>
        <name>Ni(2+)</name>
        <dbReference type="ChEBI" id="CHEBI:49786"/>
    </ligand>
</feature>
<feature type="binding site" evidence="1">
    <location>
        <position position="97"/>
    </location>
    <ligand>
        <name>Ni(2+)</name>
        <dbReference type="ChEBI" id="CHEBI:49786"/>
    </ligand>
</feature>
<keyword id="KW-0238">DNA-binding</keyword>
<keyword id="KW-0479">Metal-binding</keyword>
<keyword id="KW-0533">Nickel</keyword>
<keyword id="KW-0804">Transcription</keyword>
<keyword id="KW-0805">Transcription regulation</keyword>
<dbReference type="EMBL" id="CP001097">
    <property type="protein sequence ID" value="ACD91035.1"/>
    <property type="molecule type" value="Genomic_DNA"/>
</dbReference>
<dbReference type="RefSeq" id="WP_012466904.1">
    <property type="nucleotide sequence ID" value="NC_010803.1"/>
</dbReference>
<dbReference type="SMR" id="B3EFS3"/>
<dbReference type="STRING" id="290315.Clim_2003"/>
<dbReference type="KEGG" id="cli:Clim_2003"/>
<dbReference type="eggNOG" id="COG0864">
    <property type="taxonomic scope" value="Bacteria"/>
</dbReference>
<dbReference type="HOGENOM" id="CLU_113319_1_2_10"/>
<dbReference type="OrthoDB" id="9806294at2"/>
<dbReference type="Proteomes" id="UP000008841">
    <property type="component" value="Chromosome"/>
</dbReference>
<dbReference type="GO" id="GO:0003677">
    <property type="term" value="F:DNA binding"/>
    <property type="evidence" value="ECO:0007669"/>
    <property type="project" value="UniProtKB-KW"/>
</dbReference>
<dbReference type="GO" id="GO:0003700">
    <property type="term" value="F:DNA-binding transcription factor activity"/>
    <property type="evidence" value="ECO:0007669"/>
    <property type="project" value="UniProtKB-UniRule"/>
</dbReference>
<dbReference type="GO" id="GO:0016151">
    <property type="term" value="F:nickel cation binding"/>
    <property type="evidence" value="ECO:0007669"/>
    <property type="project" value="UniProtKB-UniRule"/>
</dbReference>
<dbReference type="GO" id="GO:0010045">
    <property type="term" value="P:response to nickel cation"/>
    <property type="evidence" value="ECO:0007669"/>
    <property type="project" value="InterPro"/>
</dbReference>
<dbReference type="CDD" id="cd22231">
    <property type="entry name" value="RHH_NikR_HicB-like"/>
    <property type="match status" value="1"/>
</dbReference>
<dbReference type="Gene3D" id="3.30.70.1150">
    <property type="entry name" value="ACT-like. Chain A, domain 2"/>
    <property type="match status" value="1"/>
</dbReference>
<dbReference type="Gene3D" id="1.10.1220.10">
    <property type="entry name" value="Met repressor-like"/>
    <property type="match status" value="1"/>
</dbReference>
<dbReference type="HAMAP" id="MF_00476">
    <property type="entry name" value="NikR"/>
    <property type="match status" value="1"/>
</dbReference>
<dbReference type="InterPro" id="IPR027271">
    <property type="entry name" value="Acetolactate_synth/TF_NikR_C"/>
</dbReference>
<dbReference type="InterPro" id="IPR045865">
    <property type="entry name" value="ACT-like_dom_sf"/>
</dbReference>
<dbReference type="InterPro" id="IPR013321">
    <property type="entry name" value="Arc_rbn_hlx_hlx"/>
</dbReference>
<dbReference type="InterPro" id="IPR002145">
    <property type="entry name" value="CopG"/>
</dbReference>
<dbReference type="InterPro" id="IPR050192">
    <property type="entry name" value="CopG/NikR_regulator"/>
</dbReference>
<dbReference type="InterPro" id="IPR022988">
    <property type="entry name" value="Ni_resp_reg_NikR"/>
</dbReference>
<dbReference type="InterPro" id="IPR010985">
    <property type="entry name" value="Ribbon_hlx_hlx"/>
</dbReference>
<dbReference type="InterPro" id="IPR014864">
    <property type="entry name" value="TF_NikR_Ni-bd_C"/>
</dbReference>
<dbReference type="NCBIfam" id="NF001884">
    <property type="entry name" value="PRK00630.1"/>
    <property type="match status" value="1"/>
</dbReference>
<dbReference type="NCBIfam" id="NF002169">
    <property type="entry name" value="PRK01002.1"/>
    <property type="match status" value="1"/>
</dbReference>
<dbReference type="NCBIfam" id="NF002815">
    <property type="entry name" value="PRK02967.1"/>
    <property type="match status" value="1"/>
</dbReference>
<dbReference type="NCBIfam" id="NF003381">
    <property type="entry name" value="PRK04460.1"/>
    <property type="match status" value="1"/>
</dbReference>
<dbReference type="PANTHER" id="PTHR34719">
    <property type="entry name" value="NICKEL-RESPONSIVE REGULATOR"/>
    <property type="match status" value="1"/>
</dbReference>
<dbReference type="PANTHER" id="PTHR34719:SF2">
    <property type="entry name" value="NICKEL-RESPONSIVE REGULATOR"/>
    <property type="match status" value="1"/>
</dbReference>
<dbReference type="Pfam" id="PF08753">
    <property type="entry name" value="NikR_C"/>
    <property type="match status" value="1"/>
</dbReference>
<dbReference type="Pfam" id="PF01402">
    <property type="entry name" value="RHH_1"/>
    <property type="match status" value="1"/>
</dbReference>
<dbReference type="SUPFAM" id="SSF55021">
    <property type="entry name" value="ACT-like"/>
    <property type="match status" value="1"/>
</dbReference>
<dbReference type="SUPFAM" id="SSF47598">
    <property type="entry name" value="Ribbon-helix-helix"/>
    <property type="match status" value="1"/>
</dbReference>
<protein>
    <recommendedName>
        <fullName evidence="1">Putative nickel-responsive regulator</fullName>
    </recommendedName>
</protein>